<proteinExistence type="inferred from homology"/>
<feature type="chain" id="PRO_1000043665" description="GTP cyclohydrolase 1">
    <location>
        <begin position="1"/>
        <end position="206"/>
    </location>
</feature>
<feature type="binding site" evidence="2">
    <location>
        <position position="95"/>
    </location>
    <ligand>
        <name>Zn(2+)</name>
        <dbReference type="ChEBI" id="CHEBI:29105"/>
    </ligand>
</feature>
<feature type="binding site" evidence="2">
    <location>
        <position position="98"/>
    </location>
    <ligand>
        <name>Zn(2+)</name>
        <dbReference type="ChEBI" id="CHEBI:29105"/>
    </ligand>
</feature>
<feature type="binding site" evidence="2">
    <location>
        <position position="166"/>
    </location>
    <ligand>
        <name>Zn(2+)</name>
        <dbReference type="ChEBI" id="CHEBI:29105"/>
    </ligand>
</feature>
<accession>Q6G3J8</accession>
<name>GCH1_BARHE</name>
<dbReference type="EC" id="3.5.4.16" evidence="2"/>
<dbReference type="EMBL" id="BX897699">
    <property type="protein sequence ID" value="CAF27570.1"/>
    <property type="molecule type" value="Genomic_DNA"/>
</dbReference>
<dbReference type="RefSeq" id="WP_011180671.1">
    <property type="nucleotide sequence ID" value="NZ_LRIJ02000001.1"/>
</dbReference>
<dbReference type="SMR" id="Q6G3J8"/>
<dbReference type="PaxDb" id="283166-BH07690"/>
<dbReference type="EnsemblBacteria" id="CAF27570">
    <property type="protein sequence ID" value="CAF27570"/>
    <property type="gene ID" value="BH07690"/>
</dbReference>
<dbReference type="GeneID" id="92985560"/>
<dbReference type="KEGG" id="bhe:BH07690"/>
<dbReference type="eggNOG" id="COG0302">
    <property type="taxonomic scope" value="Bacteria"/>
</dbReference>
<dbReference type="OrthoDB" id="9801207at2"/>
<dbReference type="UniPathway" id="UPA00848">
    <property type="reaction ID" value="UER00151"/>
</dbReference>
<dbReference type="Proteomes" id="UP000000421">
    <property type="component" value="Chromosome"/>
</dbReference>
<dbReference type="GO" id="GO:0005737">
    <property type="term" value="C:cytoplasm"/>
    <property type="evidence" value="ECO:0007669"/>
    <property type="project" value="TreeGrafter"/>
</dbReference>
<dbReference type="GO" id="GO:0005525">
    <property type="term" value="F:GTP binding"/>
    <property type="evidence" value="ECO:0007669"/>
    <property type="project" value="UniProtKB-KW"/>
</dbReference>
<dbReference type="GO" id="GO:0003934">
    <property type="term" value="F:GTP cyclohydrolase I activity"/>
    <property type="evidence" value="ECO:0007669"/>
    <property type="project" value="UniProtKB-UniRule"/>
</dbReference>
<dbReference type="GO" id="GO:0008270">
    <property type="term" value="F:zinc ion binding"/>
    <property type="evidence" value="ECO:0007669"/>
    <property type="project" value="UniProtKB-UniRule"/>
</dbReference>
<dbReference type="GO" id="GO:0006730">
    <property type="term" value="P:one-carbon metabolic process"/>
    <property type="evidence" value="ECO:0007669"/>
    <property type="project" value="UniProtKB-UniRule"/>
</dbReference>
<dbReference type="GO" id="GO:0006729">
    <property type="term" value="P:tetrahydrobiopterin biosynthetic process"/>
    <property type="evidence" value="ECO:0007669"/>
    <property type="project" value="TreeGrafter"/>
</dbReference>
<dbReference type="GO" id="GO:0046654">
    <property type="term" value="P:tetrahydrofolate biosynthetic process"/>
    <property type="evidence" value="ECO:0007669"/>
    <property type="project" value="UniProtKB-UniRule"/>
</dbReference>
<dbReference type="FunFam" id="1.10.286.10:FF:000001">
    <property type="entry name" value="GTP cyclohydrolase 1"/>
    <property type="match status" value="1"/>
</dbReference>
<dbReference type="FunFam" id="3.30.1130.10:FF:000001">
    <property type="entry name" value="GTP cyclohydrolase 1"/>
    <property type="match status" value="1"/>
</dbReference>
<dbReference type="Gene3D" id="1.10.286.10">
    <property type="match status" value="1"/>
</dbReference>
<dbReference type="Gene3D" id="3.30.1130.10">
    <property type="match status" value="1"/>
</dbReference>
<dbReference type="HAMAP" id="MF_00223">
    <property type="entry name" value="FolE"/>
    <property type="match status" value="1"/>
</dbReference>
<dbReference type="InterPro" id="IPR043133">
    <property type="entry name" value="GTP-CH-I_C/QueF"/>
</dbReference>
<dbReference type="InterPro" id="IPR043134">
    <property type="entry name" value="GTP-CH-I_N"/>
</dbReference>
<dbReference type="InterPro" id="IPR001474">
    <property type="entry name" value="GTP_CycHdrlase_I"/>
</dbReference>
<dbReference type="InterPro" id="IPR018234">
    <property type="entry name" value="GTP_CycHdrlase_I_CS"/>
</dbReference>
<dbReference type="InterPro" id="IPR020602">
    <property type="entry name" value="GTP_CycHdrlase_I_dom"/>
</dbReference>
<dbReference type="NCBIfam" id="TIGR00063">
    <property type="entry name" value="folE"/>
    <property type="match status" value="1"/>
</dbReference>
<dbReference type="NCBIfam" id="NF006825">
    <property type="entry name" value="PRK09347.1-2"/>
    <property type="match status" value="1"/>
</dbReference>
<dbReference type="NCBIfam" id="NF006826">
    <property type="entry name" value="PRK09347.1-3"/>
    <property type="match status" value="1"/>
</dbReference>
<dbReference type="PANTHER" id="PTHR11109:SF7">
    <property type="entry name" value="GTP CYCLOHYDROLASE 1"/>
    <property type="match status" value="1"/>
</dbReference>
<dbReference type="PANTHER" id="PTHR11109">
    <property type="entry name" value="GTP CYCLOHYDROLASE I"/>
    <property type="match status" value="1"/>
</dbReference>
<dbReference type="Pfam" id="PF01227">
    <property type="entry name" value="GTP_cyclohydroI"/>
    <property type="match status" value="1"/>
</dbReference>
<dbReference type="SUPFAM" id="SSF55620">
    <property type="entry name" value="Tetrahydrobiopterin biosynthesis enzymes-like"/>
    <property type="match status" value="1"/>
</dbReference>
<dbReference type="PROSITE" id="PS00859">
    <property type="entry name" value="GTP_CYCLOHYDROL_1_1"/>
    <property type="match status" value="1"/>
</dbReference>
<dbReference type="PROSITE" id="PS00860">
    <property type="entry name" value="GTP_CYCLOHYDROL_1_2"/>
    <property type="match status" value="1"/>
</dbReference>
<reference key="1">
    <citation type="journal article" date="2004" name="Proc. Natl. Acad. Sci. U.S.A.">
        <title>The louse-borne human pathogen Bartonella quintana is a genomic derivative of the zoonotic agent Bartonella henselae.</title>
        <authorList>
            <person name="Alsmark U.C.M."/>
            <person name="Frank A.C."/>
            <person name="Karlberg E.O."/>
            <person name="Legault B.-A."/>
            <person name="Ardell D.H."/>
            <person name="Canbaeck B."/>
            <person name="Eriksson A.-S."/>
            <person name="Naeslund A.K."/>
            <person name="Handley S.A."/>
            <person name="Huvet M."/>
            <person name="La Scola B."/>
            <person name="Holmberg M."/>
            <person name="Andersson S.G.E."/>
        </authorList>
    </citation>
    <scope>NUCLEOTIDE SEQUENCE [LARGE SCALE GENOMIC DNA]</scope>
    <source>
        <strain>ATCC 49882 / DSM 28221 / CCUG 30454 / Houston 1</strain>
    </source>
</reference>
<organism>
    <name type="scientific">Bartonella henselae (strain ATCC 49882 / DSM 28221 / CCUG 30454 / Houston 1)</name>
    <name type="common">Rochalimaea henselae</name>
    <dbReference type="NCBI Taxonomy" id="283166"/>
    <lineage>
        <taxon>Bacteria</taxon>
        <taxon>Pseudomonadati</taxon>
        <taxon>Pseudomonadota</taxon>
        <taxon>Alphaproteobacteria</taxon>
        <taxon>Hyphomicrobiales</taxon>
        <taxon>Bartonellaceae</taxon>
        <taxon>Bartonella</taxon>
    </lineage>
</organism>
<gene>
    <name evidence="2" type="primary">folE</name>
    <name type="ordered locus">BH07690</name>
</gene>
<protein>
    <recommendedName>
        <fullName evidence="2">GTP cyclohydrolase 1</fullName>
        <ecNumber evidence="2">3.5.4.16</ecNumber>
    </recommendedName>
    <alternativeName>
        <fullName evidence="2">GTP cyclohydrolase I</fullName>
        <shortName evidence="2">GTP-CH-I</shortName>
    </alternativeName>
</protein>
<keyword id="KW-0342">GTP-binding</keyword>
<keyword id="KW-0378">Hydrolase</keyword>
<keyword id="KW-0479">Metal-binding</keyword>
<keyword id="KW-0547">Nucleotide-binding</keyword>
<keyword id="KW-0554">One-carbon metabolism</keyword>
<keyword id="KW-0862">Zinc</keyword>
<sequence>MHNIKVGTKNPFLSGRKRPPFEEVEAAIRTFLLWIGENPNREGLLDTPGRVAKAYRDLFTGYDESVEEILGTVFEEVSGYNEPVIMKDLSFYSHCEHHMIPIVGKAHIAYFPDEKIVGLSKIARVVNVFSRRLQTQEAMTAQIANALETHLKPRGVAVLIEAEHMCMTMRGVQKQGAKTITTSFHGSYEKDQVAQAHFMMIVRRSS</sequence>
<comment type="catalytic activity">
    <reaction evidence="2">
        <text>GTP + H2O = 7,8-dihydroneopterin 3'-triphosphate + formate + H(+)</text>
        <dbReference type="Rhea" id="RHEA:17473"/>
        <dbReference type="ChEBI" id="CHEBI:15377"/>
        <dbReference type="ChEBI" id="CHEBI:15378"/>
        <dbReference type="ChEBI" id="CHEBI:15740"/>
        <dbReference type="ChEBI" id="CHEBI:37565"/>
        <dbReference type="ChEBI" id="CHEBI:58462"/>
        <dbReference type="EC" id="3.5.4.16"/>
    </reaction>
</comment>
<comment type="pathway">
    <text evidence="2">Cofactor biosynthesis; 7,8-dihydroneopterin triphosphate biosynthesis; 7,8-dihydroneopterin triphosphate from GTP: step 1/1.</text>
</comment>
<comment type="subunit">
    <text evidence="1">Toroid-shaped homodecamer, composed of two pentamers of five dimers.</text>
</comment>
<comment type="similarity">
    <text evidence="2">Belongs to the GTP cyclohydrolase I family.</text>
</comment>
<evidence type="ECO:0000250" key="1"/>
<evidence type="ECO:0000255" key="2">
    <source>
        <dbReference type="HAMAP-Rule" id="MF_00223"/>
    </source>
</evidence>